<name>RRF_STRS7</name>
<protein>
    <recommendedName>
        <fullName evidence="1">Ribosome-recycling factor</fullName>
        <shortName evidence="1">RRF</shortName>
    </recommendedName>
    <alternativeName>
        <fullName evidence="1">Ribosome-releasing factor</fullName>
    </alternativeName>
</protein>
<gene>
    <name evidence="1" type="primary">frr</name>
    <name type="ordered locus">SZO_04980</name>
</gene>
<organism>
    <name type="scientific">Streptococcus equi subsp. zooepidemicus (strain H70)</name>
    <dbReference type="NCBI Taxonomy" id="553483"/>
    <lineage>
        <taxon>Bacteria</taxon>
        <taxon>Bacillati</taxon>
        <taxon>Bacillota</taxon>
        <taxon>Bacilli</taxon>
        <taxon>Lactobacillales</taxon>
        <taxon>Streptococcaceae</taxon>
        <taxon>Streptococcus</taxon>
    </lineage>
</organism>
<comment type="function">
    <text evidence="1">Responsible for the release of ribosomes from messenger RNA at the termination of protein biosynthesis. May increase the efficiency of translation by recycling ribosomes from one round of translation to another.</text>
</comment>
<comment type="subcellular location">
    <subcellularLocation>
        <location evidence="1">Cytoplasm</location>
    </subcellularLocation>
</comment>
<comment type="similarity">
    <text evidence="1">Belongs to the RRF family.</text>
</comment>
<keyword id="KW-0963">Cytoplasm</keyword>
<keyword id="KW-0648">Protein biosynthesis</keyword>
<feature type="chain" id="PRO_1000202111" description="Ribosome-recycling factor">
    <location>
        <begin position="1"/>
        <end position="185"/>
    </location>
</feature>
<proteinExistence type="inferred from homology"/>
<reference key="1">
    <citation type="journal article" date="2009" name="PLoS Pathog.">
        <title>Genomic evidence for the evolution of Streptococcus equi: host restriction, increased virulence, and genetic exchange with human pathogens.</title>
        <authorList>
            <person name="Holden M.T.G."/>
            <person name="Heather Z."/>
            <person name="Paillot R."/>
            <person name="Steward K.F."/>
            <person name="Webb K."/>
            <person name="Ainslie F."/>
            <person name="Jourdan T."/>
            <person name="Bason N.C."/>
            <person name="Holroyd N.E."/>
            <person name="Mungall K."/>
            <person name="Quail M.A."/>
            <person name="Sanders M."/>
            <person name="Simmonds M."/>
            <person name="Willey D."/>
            <person name="Brooks K."/>
            <person name="Aanensen D.M."/>
            <person name="Spratt B.G."/>
            <person name="Jolley K.A."/>
            <person name="Maiden M.C.J."/>
            <person name="Kehoe M."/>
            <person name="Chanter N."/>
            <person name="Bentley S.D."/>
            <person name="Robinson C."/>
            <person name="Maskell D.J."/>
            <person name="Parkhill J."/>
            <person name="Waller A.S."/>
        </authorList>
    </citation>
    <scope>NUCLEOTIDE SEQUENCE [LARGE SCALE GENOMIC DNA]</scope>
    <source>
        <strain>H70</strain>
    </source>
</reference>
<accession>C0MCC9</accession>
<dbReference type="EMBL" id="FM204884">
    <property type="protein sequence ID" value="CAW98452.1"/>
    <property type="molecule type" value="Genomic_DNA"/>
</dbReference>
<dbReference type="SMR" id="C0MCC9"/>
<dbReference type="KEGG" id="seq:SZO_04980"/>
<dbReference type="eggNOG" id="COG0233">
    <property type="taxonomic scope" value="Bacteria"/>
</dbReference>
<dbReference type="HOGENOM" id="CLU_073981_2_0_9"/>
<dbReference type="Proteomes" id="UP000001368">
    <property type="component" value="Chromosome"/>
</dbReference>
<dbReference type="GO" id="GO:0005737">
    <property type="term" value="C:cytoplasm"/>
    <property type="evidence" value="ECO:0007669"/>
    <property type="project" value="UniProtKB-SubCell"/>
</dbReference>
<dbReference type="GO" id="GO:0043023">
    <property type="term" value="F:ribosomal large subunit binding"/>
    <property type="evidence" value="ECO:0007669"/>
    <property type="project" value="TreeGrafter"/>
</dbReference>
<dbReference type="GO" id="GO:0006415">
    <property type="term" value="P:translational termination"/>
    <property type="evidence" value="ECO:0007669"/>
    <property type="project" value="UniProtKB-UniRule"/>
</dbReference>
<dbReference type="CDD" id="cd00520">
    <property type="entry name" value="RRF"/>
    <property type="match status" value="1"/>
</dbReference>
<dbReference type="FunFam" id="1.10.132.20:FF:000001">
    <property type="entry name" value="Ribosome-recycling factor"/>
    <property type="match status" value="1"/>
</dbReference>
<dbReference type="FunFam" id="3.30.1360.40:FF:000001">
    <property type="entry name" value="Ribosome-recycling factor"/>
    <property type="match status" value="1"/>
</dbReference>
<dbReference type="Gene3D" id="3.30.1360.40">
    <property type="match status" value="1"/>
</dbReference>
<dbReference type="Gene3D" id="1.10.132.20">
    <property type="entry name" value="Ribosome-recycling factor"/>
    <property type="match status" value="1"/>
</dbReference>
<dbReference type="HAMAP" id="MF_00040">
    <property type="entry name" value="RRF"/>
    <property type="match status" value="1"/>
</dbReference>
<dbReference type="InterPro" id="IPR002661">
    <property type="entry name" value="Ribosome_recyc_fac"/>
</dbReference>
<dbReference type="InterPro" id="IPR023584">
    <property type="entry name" value="Ribosome_recyc_fac_dom"/>
</dbReference>
<dbReference type="InterPro" id="IPR036191">
    <property type="entry name" value="RRF_sf"/>
</dbReference>
<dbReference type="NCBIfam" id="TIGR00496">
    <property type="entry name" value="frr"/>
    <property type="match status" value="1"/>
</dbReference>
<dbReference type="PANTHER" id="PTHR20982:SF3">
    <property type="entry name" value="MITOCHONDRIAL RIBOSOME RECYCLING FACTOR PSEUDO 1"/>
    <property type="match status" value="1"/>
</dbReference>
<dbReference type="PANTHER" id="PTHR20982">
    <property type="entry name" value="RIBOSOME RECYCLING FACTOR"/>
    <property type="match status" value="1"/>
</dbReference>
<dbReference type="Pfam" id="PF01765">
    <property type="entry name" value="RRF"/>
    <property type="match status" value="1"/>
</dbReference>
<dbReference type="SUPFAM" id="SSF55194">
    <property type="entry name" value="Ribosome recycling factor, RRF"/>
    <property type="match status" value="1"/>
</dbReference>
<sequence length="185" mass="20554">MANAIIETAKERFTQSHHSLAREYASIRAGRANASLLDRIQVDYYGAPTPLNQLASITVPEARVLLISPFDKSSIKDIERALNASDLGITPANDGSVIRLVIPALTEETRKELAKEVKKVGETAKVSIRNIRRDAMDEAKKQEKAKEITEDELKALEKDIQKATDEAVKEIDRMTADKEKELLSV</sequence>
<evidence type="ECO:0000255" key="1">
    <source>
        <dbReference type="HAMAP-Rule" id="MF_00040"/>
    </source>
</evidence>